<organism>
    <name type="scientific">Teredinibacter turnerae (strain ATCC 39867 / T7901)</name>
    <dbReference type="NCBI Taxonomy" id="377629"/>
    <lineage>
        <taxon>Bacteria</taxon>
        <taxon>Pseudomonadati</taxon>
        <taxon>Pseudomonadota</taxon>
        <taxon>Gammaproteobacteria</taxon>
        <taxon>Cellvibrionales</taxon>
        <taxon>Cellvibrionaceae</taxon>
        <taxon>Teredinibacter</taxon>
    </lineage>
</organism>
<reference key="1">
    <citation type="journal article" date="2009" name="PLoS ONE">
        <title>The complete genome of Teredinibacter turnerae T7901: an intracellular endosymbiont of marine wood-boring bivalves (shipworms).</title>
        <authorList>
            <person name="Yang J.C."/>
            <person name="Madupu R."/>
            <person name="Durkin A.S."/>
            <person name="Ekborg N.A."/>
            <person name="Pedamallu C.S."/>
            <person name="Hostetler J.B."/>
            <person name="Radune D."/>
            <person name="Toms B.S."/>
            <person name="Henrissat B."/>
            <person name="Coutinho P.M."/>
            <person name="Schwarz S."/>
            <person name="Field L."/>
            <person name="Trindade-Silva A.E."/>
            <person name="Soares C.A.G."/>
            <person name="Elshahawi S."/>
            <person name="Hanora A."/>
            <person name="Schmidt E.W."/>
            <person name="Haygood M.G."/>
            <person name="Posfai J."/>
            <person name="Benner J."/>
            <person name="Madinger C."/>
            <person name="Nove J."/>
            <person name="Anton B."/>
            <person name="Chaudhary K."/>
            <person name="Foster J."/>
            <person name="Holman A."/>
            <person name="Kumar S."/>
            <person name="Lessard P.A."/>
            <person name="Luyten Y.A."/>
            <person name="Slatko B."/>
            <person name="Wood N."/>
            <person name="Wu B."/>
            <person name="Teplitski M."/>
            <person name="Mougous J.D."/>
            <person name="Ward N."/>
            <person name="Eisen J.A."/>
            <person name="Badger J.H."/>
            <person name="Distel D.L."/>
        </authorList>
    </citation>
    <scope>NUCLEOTIDE SEQUENCE [LARGE SCALE GENOMIC DNA]</scope>
    <source>
        <strain>ATCC 39867 / T7901</strain>
    </source>
</reference>
<keyword id="KW-0479">Metal-binding</keyword>
<keyword id="KW-1185">Reference proteome</keyword>
<keyword id="KW-0687">Ribonucleoprotein</keyword>
<keyword id="KW-0689">Ribosomal protein</keyword>
<keyword id="KW-0694">RNA-binding</keyword>
<keyword id="KW-0699">rRNA-binding</keyword>
<keyword id="KW-0862">Zinc</keyword>
<protein>
    <recommendedName>
        <fullName evidence="1">Large ribosomal subunit protein bL31</fullName>
    </recommendedName>
    <alternativeName>
        <fullName evidence="2">50S ribosomal protein L31</fullName>
    </alternativeName>
</protein>
<name>RL31_TERTT</name>
<accession>C5BRK5</accession>
<gene>
    <name evidence="1" type="primary">rpmE</name>
    <name type="ordered locus">TERTU_3587</name>
</gene>
<evidence type="ECO:0000255" key="1">
    <source>
        <dbReference type="HAMAP-Rule" id="MF_00501"/>
    </source>
</evidence>
<evidence type="ECO:0000305" key="2"/>
<dbReference type="EMBL" id="CP001614">
    <property type="protein sequence ID" value="ACR14790.1"/>
    <property type="molecule type" value="Genomic_DNA"/>
</dbReference>
<dbReference type="RefSeq" id="WP_015820904.1">
    <property type="nucleotide sequence ID" value="NC_012997.1"/>
</dbReference>
<dbReference type="SMR" id="C5BRK5"/>
<dbReference type="STRING" id="377629.TERTU_3587"/>
<dbReference type="KEGG" id="ttu:TERTU_3587"/>
<dbReference type="eggNOG" id="COG0254">
    <property type="taxonomic scope" value="Bacteria"/>
</dbReference>
<dbReference type="HOGENOM" id="CLU_114306_4_3_6"/>
<dbReference type="OrthoDB" id="9803251at2"/>
<dbReference type="Proteomes" id="UP000009080">
    <property type="component" value="Chromosome"/>
</dbReference>
<dbReference type="GO" id="GO:1990904">
    <property type="term" value="C:ribonucleoprotein complex"/>
    <property type="evidence" value="ECO:0007669"/>
    <property type="project" value="UniProtKB-KW"/>
</dbReference>
<dbReference type="GO" id="GO:0005840">
    <property type="term" value="C:ribosome"/>
    <property type="evidence" value="ECO:0007669"/>
    <property type="project" value="UniProtKB-KW"/>
</dbReference>
<dbReference type="GO" id="GO:0046872">
    <property type="term" value="F:metal ion binding"/>
    <property type="evidence" value="ECO:0007669"/>
    <property type="project" value="UniProtKB-KW"/>
</dbReference>
<dbReference type="GO" id="GO:0019843">
    <property type="term" value="F:rRNA binding"/>
    <property type="evidence" value="ECO:0007669"/>
    <property type="project" value="UniProtKB-KW"/>
</dbReference>
<dbReference type="GO" id="GO:0003735">
    <property type="term" value="F:structural constituent of ribosome"/>
    <property type="evidence" value="ECO:0007669"/>
    <property type="project" value="InterPro"/>
</dbReference>
<dbReference type="GO" id="GO:0006412">
    <property type="term" value="P:translation"/>
    <property type="evidence" value="ECO:0007669"/>
    <property type="project" value="UniProtKB-UniRule"/>
</dbReference>
<dbReference type="Gene3D" id="4.10.830.30">
    <property type="entry name" value="Ribosomal protein L31"/>
    <property type="match status" value="1"/>
</dbReference>
<dbReference type="HAMAP" id="MF_00501">
    <property type="entry name" value="Ribosomal_bL31_1"/>
    <property type="match status" value="1"/>
</dbReference>
<dbReference type="InterPro" id="IPR034704">
    <property type="entry name" value="Ribosomal_bL28/bL31-like_sf"/>
</dbReference>
<dbReference type="InterPro" id="IPR002150">
    <property type="entry name" value="Ribosomal_bL31"/>
</dbReference>
<dbReference type="InterPro" id="IPR027491">
    <property type="entry name" value="Ribosomal_bL31_A"/>
</dbReference>
<dbReference type="InterPro" id="IPR042105">
    <property type="entry name" value="Ribosomal_bL31_sf"/>
</dbReference>
<dbReference type="NCBIfam" id="TIGR00105">
    <property type="entry name" value="L31"/>
    <property type="match status" value="1"/>
</dbReference>
<dbReference type="NCBIfam" id="NF000612">
    <property type="entry name" value="PRK00019.1"/>
    <property type="match status" value="1"/>
</dbReference>
<dbReference type="PANTHER" id="PTHR33280">
    <property type="entry name" value="50S RIBOSOMAL PROTEIN L31, CHLOROPLASTIC"/>
    <property type="match status" value="1"/>
</dbReference>
<dbReference type="PANTHER" id="PTHR33280:SF6">
    <property type="entry name" value="LARGE RIBOSOMAL SUBUNIT PROTEIN BL31A"/>
    <property type="match status" value="1"/>
</dbReference>
<dbReference type="Pfam" id="PF01197">
    <property type="entry name" value="Ribosomal_L31"/>
    <property type="match status" value="1"/>
</dbReference>
<dbReference type="PRINTS" id="PR01249">
    <property type="entry name" value="RIBOSOMALL31"/>
</dbReference>
<dbReference type="SUPFAM" id="SSF143800">
    <property type="entry name" value="L28p-like"/>
    <property type="match status" value="1"/>
</dbReference>
<dbReference type="PROSITE" id="PS01143">
    <property type="entry name" value="RIBOSOMAL_L31"/>
    <property type="match status" value="1"/>
</dbReference>
<comment type="function">
    <text evidence="1">Binds the 23S rRNA.</text>
</comment>
<comment type="cofactor">
    <cofactor evidence="1">
        <name>Zn(2+)</name>
        <dbReference type="ChEBI" id="CHEBI:29105"/>
    </cofactor>
    <text evidence="1">Binds 1 zinc ion per subunit.</text>
</comment>
<comment type="subunit">
    <text evidence="1">Part of the 50S ribosomal subunit.</text>
</comment>
<comment type="similarity">
    <text evidence="1">Belongs to the bacterial ribosomal protein bL31 family. Type A subfamily.</text>
</comment>
<proteinExistence type="inferred from homology"/>
<feature type="chain" id="PRO_1000206528" description="Large ribosomal subunit protein bL31">
    <location>
        <begin position="1"/>
        <end position="69"/>
    </location>
</feature>
<feature type="binding site" evidence="1">
    <location>
        <position position="16"/>
    </location>
    <ligand>
        <name>Zn(2+)</name>
        <dbReference type="ChEBI" id="CHEBI:29105"/>
    </ligand>
</feature>
<feature type="binding site" evidence="1">
    <location>
        <position position="18"/>
    </location>
    <ligand>
        <name>Zn(2+)</name>
        <dbReference type="ChEBI" id="CHEBI:29105"/>
    </ligand>
</feature>
<feature type="binding site" evidence="1">
    <location>
        <position position="37"/>
    </location>
    <ligand>
        <name>Zn(2+)</name>
        <dbReference type="ChEBI" id="CHEBI:29105"/>
    </ligand>
</feature>
<feature type="binding site" evidence="1">
    <location>
        <position position="40"/>
    </location>
    <ligand>
        <name>Zn(2+)</name>
        <dbReference type="ChEBI" id="CHEBI:29105"/>
    </ligand>
</feature>
<sequence>MKEDIQPKYGDMTATCSCGNVIKTRSTLAKDIHVDVCSECHPFYTGKQKVVDSGGRIDRFNKRFTRRSK</sequence>